<evidence type="ECO:0000255" key="1">
    <source>
        <dbReference type="HAMAP-Rule" id="MF_00012"/>
    </source>
</evidence>
<organism>
    <name type="scientific">Methanosarcina barkeri (strain Fusaro / DSM 804)</name>
    <dbReference type="NCBI Taxonomy" id="269797"/>
    <lineage>
        <taxon>Archaea</taxon>
        <taxon>Methanobacteriati</taxon>
        <taxon>Methanobacteriota</taxon>
        <taxon>Stenosarchaea group</taxon>
        <taxon>Methanomicrobia</taxon>
        <taxon>Methanosarcinales</taxon>
        <taxon>Methanosarcinaceae</taxon>
        <taxon>Methanosarcina</taxon>
    </lineage>
</organism>
<reference key="1">
    <citation type="journal article" date="2006" name="J. Bacteriol.">
        <title>The Methanosarcina barkeri genome: comparative analysis with Methanosarcina acetivorans and Methanosarcina mazei reveals extensive rearrangement within methanosarcinal genomes.</title>
        <authorList>
            <person name="Maeder D.L."/>
            <person name="Anderson I."/>
            <person name="Brettin T.S."/>
            <person name="Bruce D.C."/>
            <person name="Gilna P."/>
            <person name="Han C.S."/>
            <person name="Lapidus A."/>
            <person name="Metcalf W.W."/>
            <person name="Saunders E."/>
            <person name="Tapia R."/>
            <person name="Sowers K.R."/>
        </authorList>
    </citation>
    <scope>NUCLEOTIDE SEQUENCE [LARGE SCALE GENOMIC DNA]</scope>
    <source>
        <strain>Fusaro / DSM 804</strain>
    </source>
</reference>
<proteinExistence type="inferred from homology"/>
<accession>Q46AU2</accession>
<keyword id="KW-0001">2Fe-2S</keyword>
<keyword id="KW-0028">Amino-acid biosynthesis</keyword>
<keyword id="KW-0100">Branched-chain amino acid biosynthesis</keyword>
<keyword id="KW-0408">Iron</keyword>
<keyword id="KW-0411">Iron-sulfur</keyword>
<keyword id="KW-0456">Lyase</keyword>
<keyword id="KW-0460">Magnesium</keyword>
<keyword id="KW-0479">Metal-binding</keyword>
<comment type="function">
    <text evidence="1">Functions in the biosynthesis of branched-chain amino acids. Catalyzes the dehydration of (2R,3R)-2,3-dihydroxy-3-methylpentanoate (2,3-dihydroxy-3-methylvalerate) into 2-oxo-3-methylpentanoate (2-oxo-3-methylvalerate) and of (2R)-2,3-dihydroxy-3-methylbutanoate (2,3-dihydroxyisovalerate) into 2-oxo-3-methylbutanoate (2-oxoisovalerate), the penultimate precursor to L-isoleucine and L-valine, respectively.</text>
</comment>
<comment type="catalytic activity">
    <reaction evidence="1">
        <text>(2R)-2,3-dihydroxy-3-methylbutanoate = 3-methyl-2-oxobutanoate + H2O</text>
        <dbReference type="Rhea" id="RHEA:24809"/>
        <dbReference type="ChEBI" id="CHEBI:11851"/>
        <dbReference type="ChEBI" id="CHEBI:15377"/>
        <dbReference type="ChEBI" id="CHEBI:49072"/>
        <dbReference type="EC" id="4.2.1.9"/>
    </reaction>
    <physiologicalReaction direction="left-to-right" evidence="1">
        <dbReference type="Rhea" id="RHEA:24810"/>
    </physiologicalReaction>
</comment>
<comment type="catalytic activity">
    <reaction evidence="1">
        <text>(2R,3R)-2,3-dihydroxy-3-methylpentanoate = (S)-3-methyl-2-oxopentanoate + H2O</text>
        <dbReference type="Rhea" id="RHEA:27694"/>
        <dbReference type="ChEBI" id="CHEBI:15377"/>
        <dbReference type="ChEBI" id="CHEBI:35146"/>
        <dbReference type="ChEBI" id="CHEBI:49258"/>
        <dbReference type="EC" id="4.2.1.9"/>
    </reaction>
    <physiologicalReaction direction="left-to-right" evidence="1">
        <dbReference type="Rhea" id="RHEA:27695"/>
    </physiologicalReaction>
</comment>
<comment type="cofactor">
    <cofactor evidence="1">
        <name>[2Fe-2S] cluster</name>
        <dbReference type="ChEBI" id="CHEBI:190135"/>
    </cofactor>
    <text evidence="1">Binds 1 [2Fe-2S] cluster per subunit. This cluster acts as a Lewis acid cofactor.</text>
</comment>
<comment type="cofactor">
    <cofactor evidence="1">
        <name>Mg(2+)</name>
        <dbReference type="ChEBI" id="CHEBI:18420"/>
    </cofactor>
</comment>
<comment type="pathway">
    <text evidence="1">Amino-acid biosynthesis; L-isoleucine biosynthesis; L-isoleucine from 2-oxobutanoate: step 3/4.</text>
</comment>
<comment type="pathway">
    <text evidence="1">Amino-acid biosynthesis; L-valine biosynthesis; L-valine from pyruvate: step 3/4.</text>
</comment>
<comment type="subunit">
    <text evidence="1">Homodimer.</text>
</comment>
<comment type="similarity">
    <text evidence="1">Belongs to the IlvD/Edd family.</text>
</comment>
<protein>
    <recommendedName>
        <fullName evidence="1">Dihydroxy-acid dehydratase</fullName>
        <shortName evidence="1">DAD</shortName>
        <ecNumber evidence="1">4.2.1.9</ecNumber>
    </recommendedName>
</protein>
<feature type="chain" id="PRO_0000225440" description="Dihydroxy-acid dehydratase">
    <location>
        <begin position="1"/>
        <end position="553"/>
    </location>
</feature>
<feature type="active site" description="Proton acceptor" evidence="1">
    <location>
        <position position="470"/>
    </location>
</feature>
<feature type="binding site" evidence="1">
    <location>
        <position position="78"/>
    </location>
    <ligand>
        <name>Mg(2+)</name>
        <dbReference type="ChEBI" id="CHEBI:18420"/>
    </ligand>
</feature>
<feature type="binding site" evidence="1">
    <location>
        <position position="119"/>
    </location>
    <ligand>
        <name>[2Fe-2S] cluster</name>
        <dbReference type="ChEBI" id="CHEBI:190135"/>
    </ligand>
</feature>
<feature type="binding site" evidence="1">
    <location>
        <position position="120"/>
    </location>
    <ligand>
        <name>Mg(2+)</name>
        <dbReference type="ChEBI" id="CHEBI:18420"/>
    </ligand>
</feature>
<feature type="binding site" description="via carbamate group" evidence="1">
    <location>
        <position position="121"/>
    </location>
    <ligand>
        <name>Mg(2+)</name>
        <dbReference type="ChEBI" id="CHEBI:18420"/>
    </ligand>
</feature>
<feature type="binding site" evidence="1">
    <location>
        <position position="191"/>
    </location>
    <ligand>
        <name>[2Fe-2S] cluster</name>
        <dbReference type="ChEBI" id="CHEBI:190135"/>
    </ligand>
</feature>
<feature type="binding site" evidence="1">
    <location>
        <position position="444"/>
    </location>
    <ligand>
        <name>Mg(2+)</name>
        <dbReference type="ChEBI" id="CHEBI:18420"/>
    </ligand>
</feature>
<feature type="modified residue" description="N6-carboxylysine" evidence="1">
    <location>
        <position position="121"/>
    </location>
</feature>
<sequence length="553" mass="59074">MRSDIIKEGPERAPNRSLLKATGVTDSEMRKPFIAVVNSWNDIIPGHIHLNKLAEAVKAGIRNAGGVPFEFHTIGVCDGIAMGHEGMKYSLPSREVIEDTIELMVKAHQFDGIVLIPTCDKIVPGHLMAAGRLDIPAIVVTGGPMLPGYVDDKYTDLISVFEGVGAYSTGKLSERDLKRLENLSCGGAGSCAGMFTANTMACVTEALGLSLPGCATAHAVDAKKARIAKESGERIVEMVKENLTPRKIVTFKSFENAIMVDMAVGGSTNTTLHLPALAHEFGLNLPLEKFDELSRETPHLISLRPGGPNFMLHFDRAGGVQAVMQRLSSKLHLDQLTVNGKTIGENLNEFEIINPKLNKEIIATLEKPIHAEGGIAVLKGNLAPNGSVVKQAAVDPKMRVHTGPAKVYDCEEDAMENILAGNVKPGDIVVIRYEGPKGGPGMREMLAATAAIGGMGLLESVALVTDGRFSGGTRGPCIGHISPEASEGGPIALVKDGDMIEINIPERVLNLKVSEEELEQRKAAFVPPKKEVTGYLARYQRSVHSANTGGIVD</sequence>
<gene>
    <name evidence="1" type="primary">ilvD</name>
    <name type="ordered locus">Mbar_A2069</name>
</gene>
<name>ILVD_METBF</name>
<dbReference type="EC" id="4.2.1.9" evidence="1"/>
<dbReference type="EMBL" id="CP000099">
    <property type="protein sequence ID" value="AAZ71000.1"/>
    <property type="molecule type" value="Genomic_DNA"/>
</dbReference>
<dbReference type="SMR" id="Q46AU2"/>
<dbReference type="STRING" id="269797.Mbar_A2069"/>
<dbReference type="PaxDb" id="269797-Mbar_A2069"/>
<dbReference type="KEGG" id="mba:Mbar_A2069"/>
<dbReference type="eggNOG" id="arCOG04045">
    <property type="taxonomic scope" value="Archaea"/>
</dbReference>
<dbReference type="HOGENOM" id="CLU_014271_4_2_2"/>
<dbReference type="OrthoDB" id="8674at2157"/>
<dbReference type="UniPathway" id="UPA00047">
    <property type="reaction ID" value="UER00057"/>
</dbReference>
<dbReference type="UniPathway" id="UPA00049">
    <property type="reaction ID" value="UER00061"/>
</dbReference>
<dbReference type="GO" id="GO:0005829">
    <property type="term" value="C:cytosol"/>
    <property type="evidence" value="ECO:0007669"/>
    <property type="project" value="TreeGrafter"/>
</dbReference>
<dbReference type="GO" id="GO:0051537">
    <property type="term" value="F:2 iron, 2 sulfur cluster binding"/>
    <property type="evidence" value="ECO:0007669"/>
    <property type="project" value="UniProtKB-UniRule"/>
</dbReference>
<dbReference type="GO" id="GO:0004160">
    <property type="term" value="F:dihydroxy-acid dehydratase activity"/>
    <property type="evidence" value="ECO:0007669"/>
    <property type="project" value="UniProtKB-UniRule"/>
</dbReference>
<dbReference type="GO" id="GO:0000287">
    <property type="term" value="F:magnesium ion binding"/>
    <property type="evidence" value="ECO:0007669"/>
    <property type="project" value="UniProtKB-UniRule"/>
</dbReference>
<dbReference type="GO" id="GO:0009097">
    <property type="term" value="P:isoleucine biosynthetic process"/>
    <property type="evidence" value="ECO:0007669"/>
    <property type="project" value="UniProtKB-UniRule"/>
</dbReference>
<dbReference type="GO" id="GO:0009099">
    <property type="term" value="P:L-valine biosynthetic process"/>
    <property type="evidence" value="ECO:0007669"/>
    <property type="project" value="UniProtKB-UniRule"/>
</dbReference>
<dbReference type="FunFam" id="3.50.30.80:FF:000001">
    <property type="entry name" value="Dihydroxy-acid dehydratase"/>
    <property type="match status" value="1"/>
</dbReference>
<dbReference type="Gene3D" id="3.50.30.80">
    <property type="entry name" value="IlvD/EDD C-terminal domain-like"/>
    <property type="match status" value="1"/>
</dbReference>
<dbReference type="HAMAP" id="MF_00012">
    <property type="entry name" value="IlvD"/>
    <property type="match status" value="1"/>
</dbReference>
<dbReference type="InterPro" id="IPR042096">
    <property type="entry name" value="Dihydro-acid_dehy_C"/>
</dbReference>
<dbReference type="InterPro" id="IPR004404">
    <property type="entry name" value="DihydroxyA_deHydtase"/>
</dbReference>
<dbReference type="InterPro" id="IPR020558">
    <property type="entry name" value="DiOHA_6PGluconate_deHydtase_CS"/>
</dbReference>
<dbReference type="InterPro" id="IPR056740">
    <property type="entry name" value="ILV_EDD_C"/>
</dbReference>
<dbReference type="InterPro" id="IPR000581">
    <property type="entry name" value="ILV_EDD_N"/>
</dbReference>
<dbReference type="InterPro" id="IPR037237">
    <property type="entry name" value="IlvD/EDD_N"/>
</dbReference>
<dbReference type="NCBIfam" id="TIGR00110">
    <property type="entry name" value="ilvD"/>
    <property type="match status" value="1"/>
</dbReference>
<dbReference type="NCBIfam" id="NF002068">
    <property type="entry name" value="PRK00911.1"/>
    <property type="match status" value="1"/>
</dbReference>
<dbReference type="PANTHER" id="PTHR43661">
    <property type="entry name" value="D-XYLONATE DEHYDRATASE"/>
    <property type="match status" value="1"/>
</dbReference>
<dbReference type="PANTHER" id="PTHR43661:SF3">
    <property type="entry name" value="D-XYLONATE DEHYDRATASE YAGF-RELATED"/>
    <property type="match status" value="1"/>
</dbReference>
<dbReference type="Pfam" id="PF24877">
    <property type="entry name" value="ILV_EDD_C"/>
    <property type="match status" value="1"/>
</dbReference>
<dbReference type="Pfam" id="PF00920">
    <property type="entry name" value="ILVD_EDD_N"/>
    <property type="match status" value="1"/>
</dbReference>
<dbReference type="SUPFAM" id="SSF143975">
    <property type="entry name" value="IlvD/EDD N-terminal domain-like"/>
    <property type="match status" value="1"/>
</dbReference>
<dbReference type="SUPFAM" id="SSF52016">
    <property type="entry name" value="LeuD/IlvD-like"/>
    <property type="match status" value="1"/>
</dbReference>
<dbReference type="PROSITE" id="PS00886">
    <property type="entry name" value="ILVD_EDD_1"/>
    <property type="match status" value="1"/>
</dbReference>
<dbReference type="PROSITE" id="PS00887">
    <property type="entry name" value="ILVD_EDD_2"/>
    <property type="match status" value="1"/>
</dbReference>